<evidence type="ECO:0000255" key="1">
    <source>
        <dbReference type="HAMAP-Rule" id="MF_00315"/>
    </source>
</evidence>
<keyword id="KW-0414">Isoprene biosynthesis</keyword>
<keyword id="KW-0460">Magnesium</keyword>
<keyword id="KW-0479">Metal-binding</keyword>
<keyword id="KW-0784">Thiamine biosynthesis</keyword>
<keyword id="KW-0786">Thiamine pyrophosphate</keyword>
<keyword id="KW-0808">Transferase</keyword>
<gene>
    <name evidence="1" type="primary">dxs</name>
    <name type="ordered locus">MAV_3577</name>
</gene>
<sequence>MLEQIRGPADLQHLSTHQLRELAAEIREFLIHKVAATGGHLGPNLGVVELTLALHRVFDSPHDPIIFDTGHQAYVHKMLTGRAHEFESLRKKGGLSGYPSRSESEHDWVESSHASAALSYADGLAKAFELSGHRNRHVVAVVGDGALTGGMCWEALNNIAASGRPVIIVVNDNGRSYAPTIGGVADHLATLRLQPAYEQALQRGRDALRALPLVGKFAYRVMHSVKAGIKDSLSPQLLFTDLGLKYVGPVDGHDERAVEAALRHARGFGRPVIVHVVTRKGMGYAPAEDDEADQMHSCGVIDPITGQATKVAGPGWTATFSDALIGYARKRRDIVAITAAMPGPTGLTPFGQQFPDRLFDVGIAEQHAMTSAAGLAMGGMHPVVAIYSTFLNRAFDQIMMDVALHRLPVTMVLDRAGITGSDGASHNGMWDLSILGVVPGMRVAAPRDAARLREELGEALDVDDGPTALRFPKGDVGEDIPAIERRGSGLSGVDVLALPASGCNHDVLLIGVGAFAPMALAVARRLADQGIGVTVVDPRWVLPVSDSILELAARHKLVVTCEDNGVNGGVGSAVSAALRRAELDVPCRDVGLPQRFYEHASRGELLADLALTDQDIARRITGWVAALGSGVAEAEIREHLD</sequence>
<accession>A0QIL6</accession>
<dbReference type="EC" id="2.2.1.7" evidence="1"/>
<dbReference type="EMBL" id="CP000479">
    <property type="protein sequence ID" value="ABK66593.1"/>
    <property type="molecule type" value="Genomic_DNA"/>
</dbReference>
<dbReference type="RefSeq" id="WP_011725551.1">
    <property type="nucleotide sequence ID" value="NC_008595.1"/>
</dbReference>
<dbReference type="SMR" id="A0QIL6"/>
<dbReference type="KEGG" id="mav:MAV_3577"/>
<dbReference type="HOGENOM" id="CLU_009227_1_4_11"/>
<dbReference type="UniPathway" id="UPA00064">
    <property type="reaction ID" value="UER00091"/>
</dbReference>
<dbReference type="Proteomes" id="UP000001574">
    <property type="component" value="Chromosome"/>
</dbReference>
<dbReference type="GO" id="GO:0005829">
    <property type="term" value="C:cytosol"/>
    <property type="evidence" value="ECO:0007669"/>
    <property type="project" value="TreeGrafter"/>
</dbReference>
<dbReference type="GO" id="GO:0008661">
    <property type="term" value="F:1-deoxy-D-xylulose-5-phosphate synthase activity"/>
    <property type="evidence" value="ECO:0007669"/>
    <property type="project" value="UniProtKB-UniRule"/>
</dbReference>
<dbReference type="GO" id="GO:0000287">
    <property type="term" value="F:magnesium ion binding"/>
    <property type="evidence" value="ECO:0007669"/>
    <property type="project" value="UniProtKB-UniRule"/>
</dbReference>
<dbReference type="GO" id="GO:0030976">
    <property type="term" value="F:thiamine pyrophosphate binding"/>
    <property type="evidence" value="ECO:0007669"/>
    <property type="project" value="UniProtKB-UniRule"/>
</dbReference>
<dbReference type="GO" id="GO:0052865">
    <property type="term" value="P:1-deoxy-D-xylulose 5-phosphate biosynthetic process"/>
    <property type="evidence" value="ECO:0007669"/>
    <property type="project" value="UniProtKB-UniPathway"/>
</dbReference>
<dbReference type="GO" id="GO:0019288">
    <property type="term" value="P:isopentenyl diphosphate biosynthetic process, methylerythritol 4-phosphate pathway"/>
    <property type="evidence" value="ECO:0007669"/>
    <property type="project" value="TreeGrafter"/>
</dbReference>
<dbReference type="GO" id="GO:0016114">
    <property type="term" value="P:terpenoid biosynthetic process"/>
    <property type="evidence" value="ECO:0007669"/>
    <property type="project" value="UniProtKB-UniRule"/>
</dbReference>
<dbReference type="GO" id="GO:0009228">
    <property type="term" value="P:thiamine biosynthetic process"/>
    <property type="evidence" value="ECO:0007669"/>
    <property type="project" value="UniProtKB-UniRule"/>
</dbReference>
<dbReference type="CDD" id="cd02007">
    <property type="entry name" value="TPP_DXS"/>
    <property type="match status" value="1"/>
</dbReference>
<dbReference type="CDD" id="cd07033">
    <property type="entry name" value="TPP_PYR_DXS_TK_like"/>
    <property type="match status" value="1"/>
</dbReference>
<dbReference type="FunFam" id="3.40.50.920:FF:000002">
    <property type="entry name" value="1-deoxy-D-xylulose-5-phosphate synthase"/>
    <property type="match status" value="1"/>
</dbReference>
<dbReference type="FunFam" id="3.40.50.970:FF:000005">
    <property type="entry name" value="1-deoxy-D-xylulose-5-phosphate synthase"/>
    <property type="match status" value="1"/>
</dbReference>
<dbReference type="Gene3D" id="3.40.50.920">
    <property type="match status" value="1"/>
</dbReference>
<dbReference type="Gene3D" id="3.40.50.970">
    <property type="match status" value="2"/>
</dbReference>
<dbReference type="HAMAP" id="MF_00315">
    <property type="entry name" value="DXP_synth"/>
    <property type="match status" value="1"/>
</dbReference>
<dbReference type="InterPro" id="IPR005477">
    <property type="entry name" value="Dxylulose-5-P_synthase"/>
</dbReference>
<dbReference type="InterPro" id="IPR029061">
    <property type="entry name" value="THDP-binding"/>
</dbReference>
<dbReference type="InterPro" id="IPR009014">
    <property type="entry name" value="Transketo_C/PFOR_II"/>
</dbReference>
<dbReference type="InterPro" id="IPR005475">
    <property type="entry name" value="Transketolase-like_Pyr-bd"/>
</dbReference>
<dbReference type="InterPro" id="IPR020826">
    <property type="entry name" value="Transketolase_BS"/>
</dbReference>
<dbReference type="InterPro" id="IPR033248">
    <property type="entry name" value="Transketolase_C"/>
</dbReference>
<dbReference type="InterPro" id="IPR049557">
    <property type="entry name" value="Transketolase_CS"/>
</dbReference>
<dbReference type="NCBIfam" id="TIGR00204">
    <property type="entry name" value="dxs"/>
    <property type="match status" value="1"/>
</dbReference>
<dbReference type="NCBIfam" id="NF003933">
    <property type="entry name" value="PRK05444.2-2"/>
    <property type="match status" value="1"/>
</dbReference>
<dbReference type="PANTHER" id="PTHR43322">
    <property type="entry name" value="1-D-DEOXYXYLULOSE 5-PHOSPHATE SYNTHASE-RELATED"/>
    <property type="match status" value="1"/>
</dbReference>
<dbReference type="PANTHER" id="PTHR43322:SF5">
    <property type="entry name" value="1-DEOXY-D-XYLULOSE-5-PHOSPHATE SYNTHASE, CHLOROPLASTIC"/>
    <property type="match status" value="1"/>
</dbReference>
<dbReference type="Pfam" id="PF13292">
    <property type="entry name" value="DXP_synthase_N"/>
    <property type="match status" value="1"/>
</dbReference>
<dbReference type="Pfam" id="PF02779">
    <property type="entry name" value="Transket_pyr"/>
    <property type="match status" value="1"/>
</dbReference>
<dbReference type="Pfam" id="PF02780">
    <property type="entry name" value="Transketolase_C"/>
    <property type="match status" value="1"/>
</dbReference>
<dbReference type="SMART" id="SM00861">
    <property type="entry name" value="Transket_pyr"/>
    <property type="match status" value="1"/>
</dbReference>
<dbReference type="SUPFAM" id="SSF52518">
    <property type="entry name" value="Thiamin diphosphate-binding fold (THDP-binding)"/>
    <property type="match status" value="1"/>
</dbReference>
<dbReference type="SUPFAM" id="SSF52922">
    <property type="entry name" value="TK C-terminal domain-like"/>
    <property type="match status" value="1"/>
</dbReference>
<dbReference type="PROSITE" id="PS00801">
    <property type="entry name" value="TRANSKETOLASE_1"/>
    <property type="match status" value="1"/>
</dbReference>
<dbReference type="PROSITE" id="PS00802">
    <property type="entry name" value="TRANSKETOLASE_2"/>
    <property type="match status" value="1"/>
</dbReference>
<name>DXS_MYCA1</name>
<organism>
    <name type="scientific">Mycobacterium avium (strain 104)</name>
    <dbReference type="NCBI Taxonomy" id="243243"/>
    <lineage>
        <taxon>Bacteria</taxon>
        <taxon>Bacillati</taxon>
        <taxon>Actinomycetota</taxon>
        <taxon>Actinomycetes</taxon>
        <taxon>Mycobacteriales</taxon>
        <taxon>Mycobacteriaceae</taxon>
        <taxon>Mycobacterium</taxon>
        <taxon>Mycobacterium avium complex (MAC)</taxon>
    </lineage>
</organism>
<protein>
    <recommendedName>
        <fullName evidence="1">1-deoxy-D-xylulose-5-phosphate synthase</fullName>
        <ecNumber evidence="1">2.2.1.7</ecNumber>
    </recommendedName>
    <alternativeName>
        <fullName evidence="1">1-deoxyxylulose-5-phosphate synthase</fullName>
        <shortName evidence="1">DXP synthase</shortName>
        <shortName evidence="1">DXPS</shortName>
    </alternativeName>
</protein>
<feature type="chain" id="PRO_1000019039" description="1-deoxy-D-xylulose-5-phosphate synthase">
    <location>
        <begin position="1"/>
        <end position="641"/>
    </location>
</feature>
<feature type="binding site" evidence="1">
    <location>
        <position position="71"/>
    </location>
    <ligand>
        <name>thiamine diphosphate</name>
        <dbReference type="ChEBI" id="CHEBI:58937"/>
    </ligand>
</feature>
<feature type="binding site" evidence="1">
    <location>
        <begin position="112"/>
        <end position="114"/>
    </location>
    <ligand>
        <name>thiamine diphosphate</name>
        <dbReference type="ChEBI" id="CHEBI:58937"/>
    </ligand>
</feature>
<feature type="binding site" evidence="1">
    <location>
        <position position="144"/>
    </location>
    <ligand>
        <name>Mg(2+)</name>
        <dbReference type="ChEBI" id="CHEBI:18420"/>
    </ligand>
</feature>
<feature type="binding site" evidence="1">
    <location>
        <begin position="145"/>
        <end position="146"/>
    </location>
    <ligand>
        <name>thiamine diphosphate</name>
        <dbReference type="ChEBI" id="CHEBI:58937"/>
    </ligand>
</feature>
<feature type="binding site" evidence="1">
    <location>
        <position position="173"/>
    </location>
    <ligand>
        <name>Mg(2+)</name>
        <dbReference type="ChEBI" id="CHEBI:18420"/>
    </ligand>
</feature>
<feature type="binding site" evidence="1">
    <location>
        <position position="173"/>
    </location>
    <ligand>
        <name>thiamine diphosphate</name>
        <dbReference type="ChEBI" id="CHEBI:58937"/>
    </ligand>
</feature>
<feature type="binding site" evidence="1">
    <location>
        <position position="284"/>
    </location>
    <ligand>
        <name>thiamine diphosphate</name>
        <dbReference type="ChEBI" id="CHEBI:58937"/>
    </ligand>
</feature>
<feature type="binding site" evidence="1">
    <location>
        <position position="365"/>
    </location>
    <ligand>
        <name>thiamine diphosphate</name>
        <dbReference type="ChEBI" id="CHEBI:58937"/>
    </ligand>
</feature>
<comment type="function">
    <text evidence="1">Catalyzes the acyloin condensation reaction between C atoms 2 and 3 of pyruvate and glyceraldehyde 3-phosphate to yield 1-deoxy-D-xylulose-5-phosphate (DXP).</text>
</comment>
<comment type="catalytic activity">
    <reaction evidence="1">
        <text>D-glyceraldehyde 3-phosphate + pyruvate + H(+) = 1-deoxy-D-xylulose 5-phosphate + CO2</text>
        <dbReference type="Rhea" id="RHEA:12605"/>
        <dbReference type="ChEBI" id="CHEBI:15361"/>
        <dbReference type="ChEBI" id="CHEBI:15378"/>
        <dbReference type="ChEBI" id="CHEBI:16526"/>
        <dbReference type="ChEBI" id="CHEBI:57792"/>
        <dbReference type="ChEBI" id="CHEBI:59776"/>
        <dbReference type="EC" id="2.2.1.7"/>
    </reaction>
</comment>
<comment type="cofactor">
    <cofactor evidence="1">
        <name>Mg(2+)</name>
        <dbReference type="ChEBI" id="CHEBI:18420"/>
    </cofactor>
    <text evidence="1">Binds 1 Mg(2+) ion per subunit.</text>
</comment>
<comment type="cofactor">
    <cofactor evidence="1">
        <name>thiamine diphosphate</name>
        <dbReference type="ChEBI" id="CHEBI:58937"/>
    </cofactor>
    <text evidence="1">Binds 1 thiamine pyrophosphate per subunit.</text>
</comment>
<comment type="pathway">
    <text evidence="1">Metabolic intermediate biosynthesis; 1-deoxy-D-xylulose 5-phosphate biosynthesis; 1-deoxy-D-xylulose 5-phosphate from D-glyceraldehyde 3-phosphate and pyruvate: step 1/1.</text>
</comment>
<comment type="subunit">
    <text evidence="1">Homodimer.</text>
</comment>
<comment type="similarity">
    <text evidence="1">Belongs to the transketolase family. DXPS subfamily.</text>
</comment>
<reference key="1">
    <citation type="submission" date="2006-10" db="EMBL/GenBank/DDBJ databases">
        <authorList>
            <person name="Fleischmann R.D."/>
            <person name="Dodson R.J."/>
            <person name="Haft D.H."/>
            <person name="Merkel J.S."/>
            <person name="Nelson W.C."/>
            <person name="Fraser C.M."/>
        </authorList>
    </citation>
    <scope>NUCLEOTIDE SEQUENCE [LARGE SCALE GENOMIC DNA]</scope>
    <source>
        <strain>104</strain>
    </source>
</reference>
<proteinExistence type="inferred from homology"/>